<organism>
    <name type="scientific">Homo sapiens</name>
    <name type="common">Human</name>
    <dbReference type="NCBI Taxonomy" id="9606"/>
    <lineage>
        <taxon>Eukaryota</taxon>
        <taxon>Metazoa</taxon>
        <taxon>Chordata</taxon>
        <taxon>Craniata</taxon>
        <taxon>Vertebrata</taxon>
        <taxon>Euteleostomi</taxon>
        <taxon>Mammalia</taxon>
        <taxon>Eutheria</taxon>
        <taxon>Euarchontoglires</taxon>
        <taxon>Primates</taxon>
        <taxon>Haplorrhini</taxon>
        <taxon>Catarrhini</taxon>
        <taxon>Hominidae</taxon>
        <taxon>Homo</taxon>
    </lineage>
</organism>
<accession>Q5BKY6</accession>
<reference key="1">
    <citation type="journal article" date="2007" name="BMC Genomics">
        <title>The full-ORF clone resource of the German cDNA consortium.</title>
        <authorList>
            <person name="Bechtel S."/>
            <person name="Rosenfelder H."/>
            <person name="Duda A."/>
            <person name="Schmidt C.P."/>
            <person name="Ernst U."/>
            <person name="Wellenreuther R."/>
            <person name="Mehrle A."/>
            <person name="Schuster C."/>
            <person name="Bahr A."/>
            <person name="Bloecker H."/>
            <person name="Heubner D."/>
            <person name="Hoerlein A."/>
            <person name="Michel G."/>
            <person name="Wedler H."/>
            <person name="Koehrer K."/>
            <person name="Ottenwaelder B."/>
            <person name="Poustka A."/>
            <person name="Wiemann S."/>
            <person name="Schupp I."/>
        </authorList>
    </citation>
    <scope>NUCLEOTIDE SEQUENCE [LARGE SCALE MRNA]</scope>
</reference>
<reference key="2">
    <citation type="journal article" date="2004" name="Genome Res.">
        <title>The status, quality, and expansion of the NIH full-length cDNA project: the Mammalian Gene Collection (MGC).</title>
        <authorList>
            <consortium name="The MGC Project Team"/>
        </authorList>
    </citation>
    <scope>NUCLEOTIDE SEQUENCE [LARGE SCALE MRNA]</scope>
    <source>
        <tissue>Testis</tissue>
    </source>
</reference>
<dbReference type="EMBL" id="AL117485">
    <property type="status" value="NOT_ANNOTATED_CDS"/>
    <property type="molecule type" value="mRNA"/>
</dbReference>
<dbReference type="EMBL" id="BC050331">
    <property type="status" value="NOT_ANNOTATED_CDS"/>
    <property type="molecule type" value="mRNA"/>
</dbReference>
<dbReference type="EMBL" id="BC051721">
    <property type="status" value="NOT_ANNOTATED_CDS"/>
    <property type="molecule type" value="mRNA"/>
</dbReference>
<dbReference type="EMBL" id="BC090873">
    <property type="status" value="NOT_ANNOTATED_CDS"/>
    <property type="molecule type" value="mRNA"/>
</dbReference>
<dbReference type="FunCoup" id="Q5BKY6">
    <property type="interactions" value="5"/>
</dbReference>
<dbReference type="IntAct" id="Q5BKY6">
    <property type="interactions" value="9"/>
</dbReference>
<dbReference type="BioMuta" id="-"/>
<dbReference type="DMDM" id="74736045"/>
<dbReference type="AGR" id="HGNC:55894"/>
<dbReference type="neXtProt" id="NX_Q5BKY6"/>
<dbReference type="InParanoid" id="Q5BKY6"/>
<dbReference type="PAN-GO" id="Q5BKY6">
    <property type="GO annotations" value="0 GO annotations based on evolutionary models"/>
</dbReference>
<dbReference type="PhylomeDB" id="Q5BKY6"/>
<dbReference type="PathwayCommons" id="Q5BKY6"/>
<dbReference type="Pharos" id="Q5BKY6">
    <property type="development level" value="Tdark"/>
</dbReference>
<dbReference type="Proteomes" id="UP000005640">
    <property type="component" value="Unplaced"/>
</dbReference>
<dbReference type="RNAct" id="Q5BKY6">
    <property type="molecule type" value="protein"/>
</dbReference>
<proteinExistence type="evidence at protein level"/>
<protein>
    <recommendedName>
        <fullName>Putative uncharacterized protein DKFZp434K191</fullName>
    </recommendedName>
</protein>
<name>YV018_HUMAN</name>
<keyword id="KW-1185">Reference proteome</keyword>
<comment type="interaction">
    <interactant intactId="EBI-10243533">
        <id>Q5BKY6</id>
    </interactant>
    <interactant intactId="EBI-10171697">
        <id>Q6A162</id>
        <label>KRT40</label>
    </interactant>
    <organismsDiffer>false</organismsDiffer>
    <experiments>3</experiments>
</comment>
<comment type="interaction">
    <interactant intactId="EBI-10243533">
        <id>Q5BKY6</id>
    </interactant>
    <interactant intactId="EBI-10172150">
        <id>P60370</id>
        <label>KRTAP10-5</label>
    </interactant>
    <organismsDiffer>false</organismsDiffer>
    <experiments>3</experiments>
</comment>
<comment type="interaction">
    <interactant intactId="EBI-10243533">
        <id>Q5BKY6</id>
    </interactant>
    <interactant intactId="EBI-10172290">
        <id>P60409</id>
        <label>KRTAP10-7</label>
    </interactant>
    <organismsDiffer>false</organismsDiffer>
    <experiments>3</experiments>
</comment>
<comment type="interaction">
    <interactant intactId="EBI-10243533">
        <id>Q5BKY6</id>
    </interactant>
    <interactant intactId="EBI-10171774">
        <id>P60410</id>
        <label>KRTAP10-8</label>
    </interactant>
    <organismsDiffer>false</organismsDiffer>
    <experiments>3</experiments>
</comment>
<comment type="interaction">
    <interactant intactId="EBI-10243533">
        <id>Q5BKY6</id>
    </interactant>
    <interactant intactId="EBI-10176379">
        <id>P59991</id>
        <label>KRTAP12-2</label>
    </interactant>
    <organismsDiffer>false</organismsDiffer>
    <experiments>3</experiments>
</comment>
<comment type="interaction">
    <interactant intactId="EBI-10243533">
        <id>Q5BKY6</id>
    </interactant>
    <interactant intactId="EBI-10172511">
        <id>Q9BYR5</id>
        <label>KRTAP4-2</label>
    </interactant>
    <organismsDiffer>false</organismsDiffer>
    <experiments>3</experiments>
</comment>
<comment type="interaction">
    <interactant intactId="EBI-10243533">
        <id>Q5BKY6</id>
    </interactant>
    <interactant intactId="EBI-3958099">
        <id>P26371</id>
        <label>KRTAP5-9</label>
    </interactant>
    <organismsDiffer>false</organismsDiffer>
    <experiments>3</experiments>
</comment>
<comment type="interaction">
    <interactant intactId="EBI-10243533">
        <id>Q5BKY6</id>
    </interactant>
    <interactant intactId="EBI-724076">
        <id>Q99750</id>
        <label>MDFI</label>
    </interactant>
    <organismsDiffer>false</organismsDiffer>
    <experiments>3</experiments>
</comment>
<comment type="interaction">
    <interactant intactId="EBI-10243533">
        <id>Q5BKY6</id>
    </interactant>
    <interactant intactId="EBI-945833">
        <id>Q7Z3S9</id>
        <label>NOTCH2NLA</label>
    </interactant>
    <organismsDiffer>false</organismsDiffer>
    <experiments>3</experiments>
</comment>
<sequence>MKKRHREGCDMPGPWSTLRSHRGHHCPHLHPVLRRPTLTDVEGCLQCLDVCGHPRHAVDAHLLHASALDLLHALAHDVGHLGPLSPAGGGNVLSVLTALLGP</sequence>
<feature type="chain" id="PRO_0000320572" description="Putative uncharacterized protein DKFZp434K191">
    <location>
        <begin position="1"/>
        <end position="102"/>
    </location>
</feature>